<name>UVRC_BURL3</name>
<organism>
    <name type="scientific">Burkholderia lata (strain ATCC 17760 / DSM 23089 / LMG 22485 / NCIMB 9086 / R18194 / 383)</name>
    <dbReference type="NCBI Taxonomy" id="482957"/>
    <lineage>
        <taxon>Bacteria</taxon>
        <taxon>Pseudomonadati</taxon>
        <taxon>Pseudomonadota</taxon>
        <taxon>Betaproteobacteria</taxon>
        <taxon>Burkholderiales</taxon>
        <taxon>Burkholderiaceae</taxon>
        <taxon>Burkholderia</taxon>
        <taxon>Burkholderia cepacia complex</taxon>
    </lineage>
</organism>
<gene>
    <name evidence="1" type="primary">uvrC</name>
    <name type="ordered locus">Bcep18194_A4255</name>
</gene>
<comment type="function">
    <text evidence="1">The UvrABC repair system catalyzes the recognition and processing of DNA lesions. UvrC both incises the 5' and 3' sides of the lesion. The N-terminal half is responsible for the 3' incision and the C-terminal half is responsible for the 5' incision.</text>
</comment>
<comment type="subunit">
    <text evidence="1">Interacts with UvrB in an incision complex.</text>
</comment>
<comment type="subcellular location">
    <subcellularLocation>
        <location evidence="1">Cytoplasm</location>
    </subcellularLocation>
</comment>
<comment type="similarity">
    <text evidence="1">Belongs to the UvrC family.</text>
</comment>
<protein>
    <recommendedName>
        <fullName evidence="1">UvrABC system protein C</fullName>
        <shortName evidence="1">Protein UvrC</shortName>
    </recommendedName>
    <alternativeName>
        <fullName evidence="1">Excinuclease ABC subunit C</fullName>
    </alternativeName>
</protein>
<reference key="1">
    <citation type="submission" date="2005-10" db="EMBL/GenBank/DDBJ databases">
        <title>Complete sequence of chromosome 1 of Burkholderia sp. 383.</title>
        <authorList>
            <consortium name="US DOE Joint Genome Institute"/>
            <person name="Copeland A."/>
            <person name="Lucas S."/>
            <person name="Lapidus A."/>
            <person name="Barry K."/>
            <person name="Detter J.C."/>
            <person name="Glavina T."/>
            <person name="Hammon N."/>
            <person name="Israni S."/>
            <person name="Pitluck S."/>
            <person name="Chain P."/>
            <person name="Malfatti S."/>
            <person name="Shin M."/>
            <person name="Vergez L."/>
            <person name="Schmutz J."/>
            <person name="Larimer F."/>
            <person name="Land M."/>
            <person name="Kyrpides N."/>
            <person name="Lykidis A."/>
            <person name="Richardson P."/>
        </authorList>
    </citation>
    <scope>NUCLEOTIDE SEQUENCE [LARGE SCALE GENOMIC DNA]</scope>
    <source>
        <strain>ATCC 17760 / DSM 23089 / LMG 22485 / NCIMB 9086 / R18194 / 383</strain>
    </source>
</reference>
<proteinExistence type="inferred from homology"/>
<evidence type="ECO:0000255" key="1">
    <source>
        <dbReference type="HAMAP-Rule" id="MF_00203"/>
    </source>
</evidence>
<dbReference type="EMBL" id="CP000151">
    <property type="protein sequence ID" value="ABB07852.1"/>
    <property type="molecule type" value="Genomic_DNA"/>
</dbReference>
<dbReference type="RefSeq" id="WP_011351423.1">
    <property type="nucleotide sequence ID" value="NC_007510.1"/>
</dbReference>
<dbReference type="SMR" id="Q39I64"/>
<dbReference type="GeneID" id="45094156"/>
<dbReference type="KEGG" id="bur:Bcep18194_A4255"/>
<dbReference type="PATRIC" id="fig|482957.22.peg.1147"/>
<dbReference type="HOGENOM" id="CLU_014841_3_0_4"/>
<dbReference type="Proteomes" id="UP000002705">
    <property type="component" value="Chromosome 1"/>
</dbReference>
<dbReference type="GO" id="GO:0005737">
    <property type="term" value="C:cytoplasm"/>
    <property type="evidence" value="ECO:0007669"/>
    <property type="project" value="UniProtKB-SubCell"/>
</dbReference>
<dbReference type="GO" id="GO:0009380">
    <property type="term" value="C:excinuclease repair complex"/>
    <property type="evidence" value="ECO:0007669"/>
    <property type="project" value="InterPro"/>
</dbReference>
<dbReference type="GO" id="GO:0003677">
    <property type="term" value="F:DNA binding"/>
    <property type="evidence" value="ECO:0007669"/>
    <property type="project" value="UniProtKB-UniRule"/>
</dbReference>
<dbReference type="GO" id="GO:0009381">
    <property type="term" value="F:excinuclease ABC activity"/>
    <property type="evidence" value="ECO:0007669"/>
    <property type="project" value="UniProtKB-UniRule"/>
</dbReference>
<dbReference type="GO" id="GO:0006289">
    <property type="term" value="P:nucleotide-excision repair"/>
    <property type="evidence" value="ECO:0007669"/>
    <property type="project" value="UniProtKB-UniRule"/>
</dbReference>
<dbReference type="GO" id="GO:0009432">
    <property type="term" value="P:SOS response"/>
    <property type="evidence" value="ECO:0007669"/>
    <property type="project" value="UniProtKB-UniRule"/>
</dbReference>
<dbReference type="CDD" id="cd10434">
    <property type="entry name" value="GIY-YIG_UvrC_Cho"/>
    <property type="match status" value="1"/>
</dbReference>
<dbReference type="FunFam" id="3.30.420.340:FF:000001">
    <property type="entry name" value="UvrABC system protein C"/>
    <property type="match status" value="1"/>
</dbReference>
<dbReference type="FunFam" id="3.40.1440.10:FF:000001">
    <property type="entry name" value="UvrABC system protein C"/>
    <property type="match status" value="1"/>
</dbReference>
<dbReference type="Gene3D" id="1.10.150.20">
    <property type="entry name" value="5' to 3' exonuclease, C-terminal subdomain"/>
    <property type="match status" value="1"/>
</dbReference>
<dbReference type="Gene3D" id="3.40.1440.10">
    <property type="entry name" value="GIY-YIG endonuclease"/>
    <property type="match status" value="1"/>
</dbReference>
<dbReference type="Gene3D" id="4.10.860.10">
    <property type="entry name" value="UVR domain"/>
    <property type="match status" value="1"/>
</dbReference>
<dbReference type="Gene3D" id="3.30.420.340">
    <property type="entry name" value="UvrC, RNAse H endonuclease domain"/>
    <property type="match status" value="1"/>
</dbReference>
<dbReference type="HAMAP" id="MF_00203">
    <property type="entry name" value="UvrC"/>
    <property type="match status" value="1"/>
</dbReference>
<dbReference type="InterPro" id="IPR000305">
    <property type="entry name" value="GIY-YIG_endonuc"/>
</dbReference>
<dbReference type="InterPro" id="IPR035901">
    <property type="entry name" value="GIY-YIG_endonuc_sf"/>
</dbReference>
<dbReference type="InterPro" id="IPR047296">
    <property type="entry name" value="GIY-YIG_UvrC_Cho"/>
</dbReference>
<dbReference type="InterPro" id="IPR003583">
    <property type="entry name" value="Hlx-hairpin-Hlx_DNA-bd_motif"/>
</dbReference>
<dbReference type="InterPro" id="IPR010994">
    <property type="entry name" value="RuvA_2-like"/>
</dbReference>
<dbReference type="InterPro" id="IPR001943">
    <property type="entry name" value="UVR_dom"/>
</dbReference>
<dbReference type="InterPro" id="IPR036876">
    <property type="entry name" value="UVR_dom_sf"/>
</dbReference>
<dbReference type="InterPro" id="IPR050066">
    <property type="entry name" value="UvrABC_protein_C"/>
</dbReference>
<dbReference type="InterPro" id="IPR004791">
    <property type="entry name" value="UvrC"/>
</dbReference>
<dbReference type="InterPro" id="IPR001162">
    <property type="entry name" value="UvrC_RNase_H_dom"/>
</dbReference>
<dbReference type="InterPro" id="IPR038476">
    <property type="entry name" value="UvrC_RNase_H_dom_sf"/>
</dbReference>
<dbReference type="NCBIfam" id="NF001824">
    <property type="entry name" value="PRK00558.1-5"/>
    <property type="match status" value="1"/>
</dbReference>
<dbReference type="NCBIfam" id="TIGR00194">
    <property type="entry name" value="uvrC"/>
    <property type="match status" value="1"/>
</dbReference>
<dbReference type="PANTHER" id="PTHR30562:SF1">
    <property type="entry name" value="UVRABC SYSTEM PROTEIN C"/>
    <property type="match status" value="1"/>
</dbReference>
<dbReference type="PANTHER" id="PTHR30562">
    <property type="entry name" value="UVRC/OXIDOREDUCTASE"/>
    <property type="match status" value="1"/>
</dbReference>
<dbReference type="Pfam" id="PF01541">
    <property type="entry name" value="GIY-YIG"/>
    <property type="match status" value="1"/>
</dbReference>
<dbReference type="Pfam" id="PF14520">
    <property type="entry name" value="HHH_5"/>
    <property type="match status" value="1"/>
</dbReference>
<dbReference type="Pfam" id="PF02151">
    <property type="entry name" value="UVR"/>
    <property type="match status" value="1"/>
</dbReference>
<dbReference type="Pfam" id="PF22920">
    <property type="entry name" value="UvrC_RNaseH"/>
    <property type="match status" value="2"/>
</dbReference>
<dbReference type="Pfam" id="PF08459">
    <property type="entry name" value="UvrC_RNaseH_dom"/>
    <property type="match status" value="1"/>
</dbReference>
<dbReference type="SMART" id="SM00465">
    <property type="entry name" value="GIYc"/>
    <property type="match status" value="1"/>
</dbReference>
<dbReference type="SMART" id="SM00278">
    <property type="entry name" value="HhH1"/>
    <property type="match status" value="2"/>
</dbReference>
<dbReference type="SUPFAM" id="SSF46600">
    <property type="entry name" value="C-terminal UvrC-binding domain of UvrB"/>
    <property type="match status" value="1"/>
</dbReference>
<dbReference type="SUPFAM" id="SSF82771">
    <property type="entry name" value="GIY-YIG endonuclease"/>
    <property type="match status" value="1"/>
</dbReference>
<dbReference type="SUPFAM" id="SSF47781">
    <property type="entry name" value="RuvA domain 2-like"/>
    <property type="match status" value="1"/>
</dbReference>
<dbReference type="PROSITE" id="PS50164">
    <property type="entry name" value="GIY_YIG"/>
    <property type="match status" value="1"/>
</dbReference>
<dbReference type="PROSITE" id="PS50151">
    <property type="entry name" value="UVR"/>
    <property type="match status" value="1"/>
</dbReference>
<dbReference type="PROSITE" id="PS50165">
    <property type="entry name" value="UVRC"/>
    <property type="match status" value="1"/>
</dbReference>
<keyword id="KW-0963">Cytoplasm</keyword>
<keyword id="KW-0227">DNA damage</keyword>
<keyword id="KW-0228">DNA excision</keyword>
<keyword id="KW-0234">DNA repair</keyword>
<keyword id="KW-0267">Excision nuclease</keyword>
<keyword id="KW-0742">SOS response</keyword>
<accession>Q39I64</accession>
<sequence>MTSPEASDTPFEPKKILAQLPHMPGVYRYYDTAGAVLYVGKARDLKKRVSSYFTKTQLSPRIAMMVTRIARIETTVTRSEAEALLLENNLIKALAPRYNILFRDDKSYPYLKLTAHRFPRMAYYRGSVDKQNQYFGPFPSAWAVRESIQILQRVFQLRTCEDSVFNNRTRPCLLHQIGRCTAPCVGAISDEDYAIDVSNAARFLLGRQSEVMKELEQKMHAFAAELKFEQAAAVRNQMSSLATVLHQQAIEVGSDSDVDILAVVAQGGRVCVNLAMVRGGRHLGDKAYFPTHVESALTLAEGGIGDESELAEAVDAPADAMPDLPAEEPGRARSDAAASVEAEVLDAFIAQHYLGNRVPPVLVVSHAPASRDLLELLSEQAGHKVSLVRQPQGQRRAWLSMAEQNAQIALMRLLSEQGSQQARTRALAETLSYECDDLTTLRIECFDISHTMGEATQASCVVYHHHKMQSGEYRRYNITGITPGDDYAAMRQVLTRRYEKMVEQAAQAAAADDAAGIDGESTRQAEASSLLPNIVLIDGGKGQVEIARQVFTELGLDTSMLVGVAKGEGRKVGLETLVFADGRTPLELGKESAALMVVAQIRDEAHRFAITGMRAKRAKARQTSRLEELEGVGAKRRQRLLARFGGLRGVVAASVEELASVEGISHALAEQIYKQLH</sequence>
<feature type="chain" id="PRO_0000227407" description="UvrABC system protein C">
    <location>
        <begin position="1"/>
        <end position="677"/>
    </location>
</feature>
<feature type="domain" description="GIY-YIG" evidence="1">
    <location>
        <begin position="22"/>
        <end position="100"/>
    </location>
</feature>
<feature type="domain" description="UVR" evidence="1">
    <location>
        <begin position="209"/>
        <end position="244"/>
    </location>
</feature>